<feature type="chain" id="PRO_0000354614" description="Large ribosomal subunit protein uL16c">
    <location>
        <begin position="1"/>
        <end position="146"/>
    </location>
</feature>
<dbReference type="EMBL" id="DQ821119">
    <property type="protein sequence ID" value="ABG79638.1"/>
    <property type="molecule type" value="Genomic_DNA"/>
</dbReference>
<dbReference type="RefSeq" id="YP_001023739.1">
    <property type="nucleotide sequence ID" value="NC_008829.1"/>
</dbReference>
<dbReference type="SMR" id="A2T371"/>
<dbReference type="GeneID" id="4788215"/>
<dbReference type="GO" id="GO:0009507">
    <property type="term" value="C:chloroplast"/>
    <property type="evidence" value="ECO:0007669"/>
    <property type="project" value="UniProtKB-SubCell"/>
</dbReference>
<dbReference type="GO" id="GO:0005762">
    <property type="term" value="C:mitochondrial large ribosomal subunit"/>
    <property type="evidence" value="ECO:0007669"/>
    <property type="project" value="TreeGrafter"/>
</dbReference>
<dbReference type="GO" id="GO:0019843">
    <property type="term" value="F:rRNA binding"/>
    <property type="evidence" value="ECO:0007669"/>
    <property type="project" value="InterPro"/>
</dbReference>
<dbReference type="GO" id="GO:0003735">
    <property type="term" value="F:structural constituent of ribosome"/>
    <property type="evidence" value="ECO:0007669"/>
    <property type="project" value="InterPro"/>
</dbReference>
<dbReference type="GO" id="GO:0032543">
    <property type="term" value="P:mitochondrial translation"/>
    <property type="evidence" value="ECO:0007669"/>
    <property type="project" value="TreeGrafter"/>
</dbReference>
<dbReference type="CDD" id="cd01433">
    <property type="entry name" value="Ribosomal_L16_L10e"/>
    <property type="match status" value="1"/>
</dbReference>
<dbReference type="FunFam" id="3.90.1170.10:FF:000001">
    <property type="entry name" value="50S ribosomal protein L16"/>
    <property type="match status" value="1"/>
</dbReference>
<dbReference type="Gene3D" id="3.90.1170.10">
    <property type="entry name" value="Ribosomal protein L10e/L16"/>
    <property type="match status" value="1"/>
</dbReference>
<dbReference type="HAMAP" id="MF_01342">
    <property type="entry name" value="Ribosomal_uL16"/>
    <property type="match status" value="1"/>
</dbReference>
<dbReference type="InterPro" id="IPR047873">
    <property type="entry name" value="Ribosomal_uL16"/>
</dbReference>
<dbReference type="InterPro" id="IPR000114">
    <property type="entry name" value="Ribosomal_uL16_bact-type"/>
</dbReference>
<dbReference type="InterPro" id="IPR020798">
    <property type="entry name" value="Ribosomal_uL16_CS"/>
</dbReference>
<dbReference type="InterPro" id="IPR016180">
    <property type="entry name" value="Ribosomal_uL16_dom"/>
</dbReference>
<dbReference type="InterPro" id="IPR036920">
    <property type="entry name" value="Ribosomal_uL16_sf"/>
</dbReference>
<dbReference type="NCBIfam" id="TIGR01164">
    <property type="entry name" value="rplP_bact"/>
    <property type="match status" value="1"/>
</dbReference>
<dbReference type="PANTHER" id="PTHR12220">
    <property type="entry name" value="50S/60S RIBOSOMAL PROTEIN L16"/>
    <property type="match status" value="1"/>
</dbReference>
<dbReference type="PANTHER" id="PTHR12220:SF13">
    <property type="entry name" value="LARGE RIBOSOMAL SUBUNIT PROTEIN UL16M"/>
    <property type="match status" value="1"/>
</dbReference>
<dbReference type="Pfam" id="PF00252">
    <property type="entry name" value="Ribosomal_L16"/>
    <property type="match status" value="1"/>
</dbReference>
<dbReference type="PRINTS" id="PR00060">
    <property type="entry name" value="RIBOSOMALL16"/>
</dbReference>
<dbReference type="SUPFAM" id="SSF54686">
    <property type="entry name" value="Ribosomal protein L16p/L10e"/>
    <property type="match status" value="1"/>
</dbReference>
<dbReference type="PROSITE" id="PS00586">
    <property type="entry name" value="RIBOSOMAL_L16_1"/>
    <property type="match status" value="1"/>
</dbReference>
<dbReference type="PROSITE" id="PS00701">
    <property type="entry name" value="RIBOSOMAL_L16_2"/>
    <property type="match status" value="1"/>
</dbReference>
<gene>
    <name evidence="1" type="primary">rpl16</name>
</gene>
<protein>
    <recommendedName>
        <fullName evidence="1">Large ribosomal subunit protein uL16c</fullName>
    </recommendedName>
    <alternativeName>
        <fullName evidence="2">50S ribosomal protein L16, chloroplastic</fullName>
    </alternativeName>
</protein>
<accession>A2T371</accession>
<comment type="subunit">
    <text evidence="1">Part of the 50S ribosomal subunit.</text>
</comment>
<comment type="subcellular location">
    <subcellularLocation>
        <location>Plastid</location>
        <location>Chloroplast</location>
    </subcellularLocation>
</comment>
<comment type="similarity">
    <text evidence="1">Belongs to the universal ribosomal protein uL16 family.</text>
</comment>
<proteinExistence type="inferred from homology"/>
<sequence>MLNPRRTRFRKQHRGRMRGISTRGNRICFGKFALQALEPTWITARQIEAGRRAITRYARRGGKLWIRIFPDKPITMRPAETRMGSGKGSPEYWVSVVKPGRILYEISGVSENVARAAMKIAAYKMPIRTQFITTIKMKESILDRKE</sequence>
<keyword id="KW-0150">Chloroplast</keyword>
<keyword id="KW-0934">Plastid</keyword>
<keyword id="KW-0687">Ribonucleoprotein</keyword>
<keyword id="KW-0689">Ribosomal protein</keyword>
<evidence type="ECO:0000255" key="1">
    <source>
        <dbReference type="HAMAP-Rule" id="MF_01342"/>
    </source>
</evidence>
<evidence type="ECO:0000305" key="2"/>
<organism>
    <name type="scientific">Angiopteris evecta</name>
    <name type="common">Mule's foot fern</name>
    <name type="synonym">Polypodium evectum</name>
    <dbReference type="NCBI Taxonomy" id="13825"/>
    <lineage>
        <taxon>Eukaryota</taxon>
        <taxon>Viridiplantae</taxon>
        <taxon>Streptophyta</taxon>
        <taxon>Embryophyta</taxon>
        <taxon>Tracheophyta</taxon>
        <taxon>Polypodiopsida</taxon>
        <taxon>Marattiidae</taxon>
        <taxon>Marattiales</taxon>
        <taxon>Marattiaceae</taxon>
        <taxon>Angiopteris</taxon>
    </lineage>
</organism>
<geneLocation type="chloroplast"/>
<name>RK16_ANGEV</name>
<reference key="1">
    <citation type="journal article" date="2007" name="Am. Fern J.">
        <title>The complete plastid genome sequence of Angiopteris evecta (G. Forst.) Hoffm. (Marattiaceae).</title>
        <authorList>
            <person name="Roper J.M."/>
            <person name="Hansen S.K."/>
            <person name="Wolf P.G."/>
            <person name="Karol K.G."/>
            <person name="Mandoli D.F."/>
            <person name="Everett K.D.E."/>
            <person name="Kuehl J.V."/>
            <person name="Boore J.L."/>
        </authorList>
    </citation>
    <scope>NUCLEOTIDE SEQUENCE [LARGE SCALE GENOMIC DNA]</scope>
</reference>